<accession>B2SAP4</accession>
<sequence length="299" mass="31231">MAQLIDGKKLAEDVVSTVKTETEKLVAATGVVPGIAVVIVGEDPASQVYVASKSRKAKECGFHSVQHDLPETASEQELLNLIEGLNNDPAIHGILVQLPLPGHIDSGRVIQTIAPEKDVDGFHFINVGKLGTGEVETAFVPCTPAGAMIMIERVHGRDLSGLNAVVIGRSNIVGKPMFNLLLAANATVTVAHSRTKDLPAIARNADILVAAVGRPQMVKGDWVKPGATVIDVGINRIPAPERGEGKTRLVGDVDFAEAEKVAGAITPVPGGVGPMTIAMLMANTLTAACRSAGMKKPVF</sequence>
<comment type="function">
    <text evidence="1">Catalyzes the oxidation of 5,10-methylenetetrahydrofolate to 5,10-methenyltetrahydrofolate and then the hydrolysis of 5,10-methenyltetrahydrofolate to 10-formyltetrahydrofolate.</text>
</comment>
<comment type="catalytic activity">
    <reaction evidence="1">
        <text>(6R)-5,10-methylene-5,6,7,8-tetrahydrofolate + NADP(+) = (6R)-5,10-methenyltetrahydrofolate + NADPH</text>
        <dbReference type="Rhea" id="RHEA:22812"/>
        <dbReference type="ChEBI" id="CHEBI:15636"/>
        <dbReference type="ChEBI" id="CHEBI:57455"/>
        <dbReference type="ChEBI" id="CHEBI:57783"/>
        <dbReference type="ChEBI" id="CHEBI:58349"/>
        <dbReference type="EC" id="1.5.1.5"/>
    </reaction>
</comment>
<comment type="catalytic activity">
    <reaction evidence="1">
        <text>(6R)-5,10-methenyltetrahydrofolate + H2O = (6R)-10-formyltetrahydrofolate + H(+)</text>
        <dbReference type="Rhea" id="RHEA:23700"/>
        <dbReference type="ChEBI" id="CHEBI:15377"/>
        <dbReference type="ChEBI" id="CHEBI:15378"/>
        <dbReference type="ChEBI" id="CHEBI:57455"/>
        <dbReference type="ChEBI" id="CHEBI:195366"/>
        <dbReference type="EC" id="3.5.4.9"/>
    </reaction>
</comment>
<comment type="pathway">
    <text evidence="1">One-carbon metabolism; tetrahydrofolate interconversion.</text>
</comment>
<comment type="subunit">
    <text evidence="1">Homodimer.</text>
</comment>
<comment type="similarity">
    <text evidence="1">Belongs to the tetrahydrofolate dehydrogenase/cyclohydrolase family.</text>
</comment>
<name>FOLD_BRUA1</name>
<dbReference type="EC" id="1.5.1.5" evidence="1"/>
<dbReference type="EC" id="3.5.4.9" evidence="1"/>
<dbReference type="EMBL" id="CP000888">
    <property type="protein sequence ID" value="ACD73931.1"/>
    <property type="molecule type" value="Genomic_DNA"/>
</dbReference>
<dbReference type="RefSeq" id="WP_002967255.1">
    <property type="nucleotide sequence ID" value="NC_010740.1"/>
</dbReference>
<dbReference type="SMR" id="B2SAP4"/>
<dbReference type="GeneID" id="97535127"/>
<dbReference type="KEGG" id="bmc:BAbS19_II04320"/>
<dbReference type="HOGENOM" id="CLU_034045_1_2_5"/>
<dbReference type="UniPathway" id="UPA00193"/>
<dbReference type="Proteomes" id="UP000002565">
    <property type="component" value="Chromosome 2"/>
</dbReference>
<dbReference type="GO" id="GO:0005829">
    <property type="term" value="C:cytosol"/>
    <property type="evidence" value="ECO:0007669"/>
    <property type="project" value="TreeGrafter"/>
</dbReference>
<dbReference type="GO" id="GO:0004477">
    <property type="term" value="F:methenyltetrahydrofolate cyclohydrolase activity"/>
    <property type="evidence" value="ECO:0007669"/>
    <property type="project" value="UniProtKB-UniRule"/>
</dbReference>
<dbReference type="GO" id="GO:0004488">
    <property type="term" value="F:methylenetetrahydrofolate dehydrogenase (NADP+) activity"/>
    <property type="evidence" value="ECO:0007669"/>
    <property type="project" value="UniProtKB-UniRule"/>
</dbReference>
<dbReference type="GO" id="GO:0000105">
    <property type="term" value="P:L-histidine biosynthetic process"/>
    <property type="evidence" value="ECO:0007669"/>
    <property type="project" value="UniProtKB-KW"/>
</dbReference>
<dbReference type="GO" id="GO:0009086">
    <property type="term" value="P:methionine biosynthetic process"/>
    <property type="evidence" value="ECO:0007669"/>
    <property type="project" value="UniProtKB-KW"/>
</dbReference>
<dbReference type="GO" id="GO:0006164">
    <property type="term" value="P:purine nucleotide biosynthetic process"/>
    <property type="evidence" value="ECO:0007669"/>
    <property type="project" value="UniProtKB-KW"/>
</dbReference>
<dbReference type="GO" id="GO:0035999">
    <property type="term" value="P:tetrahydrofolate interconversion"/>
    <property type="evidence" value="ECO:0007669"/>
    <property type="project" value="UniProtKB-UniRule"/>
</dbReference>
<dbReference type="CDD" id="cd01080">
    <property type="entry name" value="NAD_bind_m-THF_DH_Cyclohyd"/>
    <property type="match status" value="1"/>
</dbReference>
<dbReference type="FunFam" id="3.40.50.720:FF:000006">
    <property type="entry name" value="Bifunctional protein FolD"/>
    <property type="match status" value="1"/>
</dbReference>
<dbReference type="FunFam" id="3.40.50.10860:FF:000005">
    <property type="entry name" value="C-1-tetrahydrofolate synthase, cytoplasmic, putative"/>
    <property type="match status" value="1"/>
</dbReference>
<dbReference type="Gene3D" id="3.40.50.10860">
    <property type="entry name" value="Leucine Dehydrogenase, chain A, domain 1"/>
    <property type="match status" value="1"/>
</dbReference>
<dbReference type="Gene3D" id="3.40.50.720">
    <property type="entry name" value="NAD(P)-binding Rossmann-like Domain"/>
    <property type="match status" value="1"/>
</dbReference>
<dbReference type="HAMAP" id="MF_01576">
    <property type="entry name" value="THF_DHG_CYH"/>
    <property type="match status" value="1"/>
</dbReference>
<dbReference type="InterPro" id="IPR046346">
    <property type="entry name" value="Aminoacid_DH-like_N_sf"/>
</dbReference>
<dbReference type="InterPro" id="IPR036291">
    <property type="entry name" value="NAD(P)-bd_dom_sf"/>
</dbReference>
<dbReference type="InterPro" id="IPR000672">
    <property type="entry name" value="THF_DH/CycHdrlase"/>
</dbReference>
<dbReference type="InterPro" id="IPR020630">
    <property type="entry name" value="THF_DH/CycHdrlase_cat_dom"/>
</dbReference>
<dbReference type="InterPro" id="IPR020867">
    <property type="entry name" value="THF_DH/CycHdrlase_CS"/>
</dbReference>
<dbReference type="InterPro" id="IPR020631">
    <property type="entry name" value="THF_DH/CycHdrlase_NAD-bd_dom"/>
</dbReference>
<dbReference type="NCBIfam" id="NF008058">
    <property type="entry name" value="PRK10792.1"/>
    <property type="match status" value="1"/>
</dbReference>
<dbReference type="NCBIfam" id="NF010783">
    <property type="entry name" value="PRK14186.1"/>
    <property type="match status" value="1"/>
</dbReference>
<dbReference type="NCBIfam" id="NF010785">
    <property type="entry name" value="PRK14188.1"/>
    <property type="match status" value="1"/>
</dbReference>
<dbReference type="PANTHER" id="PTHR48099:SF5">
    <property type="entry name" value="C-1-TETRAHYDROFOLATE SYNTHASE, CYTOPLASMIC"/>
    <property type="match status" value="1"/>
</dbReference>
<dbReference type="PANTHER" id="PTHR48099">
    <property type="entry name" value="C-1-TETRAHYDROFOLATE SYNTHASE, CYTOPLASMIC-RELATED"/>
    <property type="match status" value="1"/>
</dbReference>
<dbReference type="Pfam" id="PF00763">
    <property type="entry name" value="THF_DHG_CYH"/>
    <property type="match status" value="1"/>
</dbReference>
<dbReference type="Pfam" id="PF02882">
    <property type="entry name" value="THF_DHG_CYH_C"/>
    <property type="match status" value="1"/>
</dbReference>
<dbReference type="PRINTS" id="PR00085">
    <property type="entry name" value="THFDHDRGNASE"/>
</dbReference>
<dbReference type="SUPFAM" id="SSF53223">
    <property type="entry name" value="Aminoacid dehydrogenase-like, N-terminal domain"/>
    <property type="match status" value="1"/>
</dbReference>
<dbReference type="SUPFAM" id="SSF51735">
    <property type="entry name" value="NAD(P)-binding Rossmann-fold domains"/>
    <property type="match status" value="1"/>
</dbReference>
<dbReference type="PROSITE" id="PS00766">
    <property type="entry name" value="THF_DHG_CYH_1"/>
    <property type="match status" value="1"/>
</dbReference>
<dbReference type="PROSITE" id="PS00767">
    <property type="entry name" value="THF_DHG_CYH_2"/>
    <property type="match status" value="1"/>
</dbReference>
<reference key="1">
    <citation type="journal article" date="2008" name="PLoS ONE">
        <title>Genome sequence of Brucella abortus vaccine strain S19 compared to virulent strains yields candidate virulence genes.</title>
        <authorList>
            <person name="Crasta O.R."/>
            <person name="Folkerts O."/>
            <person name="Fei Z."/>
            <person name="Mane S.P."/>
            <person name="Evans C."/>
            <person name="Martino-Catt S."/>
            <person name="Bricker B."/>
            <person name="Yu G."/>
            <person name="Du L."/>
            <person name="Sobral B.W."/>
        </authorList>
    </citation>
    <scope>NUCLEOTIDE SEQUENCE [LARGE SCALE GENOMIC DNA]</scope>
    <source>
        <strain>S19</strain>
    </source>
</reference>
<keyword id="KW-0028">Amino-acid biosynthesis</keyword>
<keyword id="KW-0368">Histidine biosynthesis</keyword>
<keyword id="KW-0378">Hydrolase</keyword>
<keyword id="KW-0486">Methionine biosynthesis</keyword>
<keyword id="KW-0511">Multifunctional enzyme</keyword>
<keyword id="KW-0521">NADP</keyword>
<keyword id="KW-0554">One-carbon metabolism</keyword>
<keyword id="KW-0560">Oxidoreductase</keyword>
<keyword id="KW-0658">Purine biosynthesis</keyword>
<proteinExistence type="inferred from homology"/>
<organism>
    <name type="scientific">Brucella abortus (strain S19)</name>
    <dbReference type="NCBI Taxonomy" id="430066"/>
    <lineage>
        <taxon>Bacteria</taxon>
        <taxon>Pseudomonadati</taxon>
        <taxon>Pseudomonadota</taxon>
        <taxon>Alphaproteobacteria</taxon>
        <taxon>Hyphomicrobiales</taxon>
        <taxon>Brucellaceae</taxon>
        <taxon>Brucella/Ochrobactrum group</taxon>
        <taxon>Brucella</taxon>
    </lineage>
</organism>
<evidence type="ECO:0000255" key="1">
    <source>
        <dbReference type="HAMAP-Rule" id="MF_01576"/>
    </source>
</evidence>
<feature type="chain" id="PRO_1000147445" description="Bifunctional protein FolD">
    <location>
        <begin position="1"/>
        <end position="299"/>
    </location>
</feature>
<feature type="binding site" evidence="1">
    <location>
        <begin position="168"/>
        <end position="170"/>
    </location>
    <ligand>
        <name>NADP(+)</name>
        <dbReference type="ChEBI" id="CHEBI:58349"/>
    </ligand>
</feature>
<feature type="binding site" evidence="1">
    <location>
        <position position="193"/>
    </location>
    <ligand>
        <name>NADP(+)</name>
        <dbReference type="ChEBI" id="CHEBI:58349"/>
    </ligand>
</feature>
<feature type="binding site" evidence="1">
    <location>
        <position position="234"/>
    </location>
    <ligand>
        <name>NADP(+)</name>
        <dbReference type="ChEBI" id="CHEBI:58349"/>
    </ligand>
</feature>
<gene>
    <name evidence="1" type="primary">folD</name>
    <name type="ordered locus">BAbS19_II04320</name>
</gene>
<protein>
    <recommendedName>
        <fullName evidence="1">Bifunctional protein FolD</fullName>
    </recommendedName>
    <domain>
        <recommendedName>
            <fullName evidence="1">Methylenetetrahydrofolate dehydrogenase</fullName>
            <ecNumber evidence="1">1.5.1.5</ecNumber>
        </recommendedName>
    </domain>
    <domain>
        <recommendedName>
            <fullName evidence="1">Methenyltetrahydrofolate cyclohydrolase</fullName>
            <ecNumber evidence="1">3.5.4.9</ecNumber>
        </recommendedName>
    </domain>
</protein>